<keyword id="KW-0143">Chaperone</keyword>
<keyword id="KW-1015">Disulfide bond</keyword>
<keyword id="KW-0256">Endoplasmic reticulum</keyword>
<keyword id="KW-1185">Reference proteome</keyword>
<keyword id="KW-0677">Repeat</keyword>
<keyword id="KW-0732">Signal</keyword>
<keyword id="KW-0802">TPR repeat</keyword>
<keyword id="KW-0834">Unfolded protein response</keyword>
<protein>
    <recommendedName>
        <fullName>DnaJ homolog subfamily C member 3</fullName>
    </recommendedName>
</protein>
<gene>
    <name type="primary">DNAJC3</name>
    <name type="ORF">RCJMB04_31h14</name>
</gene>
<proteinExistence type="evidence at transcript level"/>
<accession>Q5ZI13</accession>
<feature type="signal peptide" evidence="2">
    <location>
        <begin position="1"/>
        <end position="31"/>
    </location>
</feature>
<feature type="chain" id="PRO_0000071048" description="DnaJ homolog subfamily C member 3">
    <location>
        <begin position="32"/>
        <end position="503"/>
    </location>
</feature>
<feature type="repeat" description="TPR 1">
    <location>
        <begin position="37"/>
        <end position="70"/>
    </location>
</feature>
<feature type="repeat" description="TPR 2">
    <location>
        <begin position="71"/>
        <end position="104"/>
    </location>
</feature>
<feature type="repeat" description="TPR 3">
    <location>
        <begin position="105"/>
        <end position="137"/>
    </location>
</feature>
<feature type="repeat" description="TPR 4">
    <location>
        <begin position="153"/>
        <end position="186"/>
    </location>
</feature>
<feature type="repeat" description="TPR 5">
    <location>
        <begin position="187"/>
        <end position="220"/>
    </location>
</feature>
<feature type="repeat" description="TPR 6">
    <location>
        <begin position="221"/>
        <end position="254"/>
    </location>
</feature>
<feature type="repeat" description="TPR 7">
    <location>
        <begin position="267"/>
        <end position="300"/>
    </location>
</feature>
<feature type="repeat" description="TPR 8">
    <location>
        <begin position="305"/>
        <end position="338"/>
    </location>
</feature>
<feature type="repeat" description="TPR 9">
    <location>
        <begin position="339"/>
        <end position="372"/>
    </location>
</feature>
<feature type="domain" description="J" evidence="3">
    <location>
        <begin position="393"/>
        <end position="461"/>
    </location>
</feature>
<feature type="region of interest" description="Flexible linker" evidence="1">
    <location>
        <begin position="374"/>
        <end position="392"/>
    </location>
</feature>
<feature type="disulfide bond" evidence="1">
    <location>
        <begin position="247"/>
        <end position="257"/>
    </location>
</feature>
<feature type="disulfide bond" evidence="1">
    <location>
        <begin position="312"/>
        <end position="328"/>
    </location>
</feature>
<dbReference type="EMBL" id="AJ720971">
    <property type="protein sequence ID" value="CAG32630.1"/>
    <property type="molecule type" value="mRNA"/>
</dbReference>
<dbReference type="RefSeq" id="NP_001008437.1">
    <property type="nucleotide sequence ID" value="NM_001008437.1"/>
</dbReference>
<dbReference type="SMR" id="Q5ZI13"/>
<dbReference type="FunCoup" id="Q5ZI13">
    <property type="interactions" value="2182"/>
</dbReference>
<dbReference type="STRING" id="9031.ENSGALP00000027249"/>
<dbReference type="PaxDb" id="9031-ENSGALP00000027249"/>
<dbReference type="GeneID" id="418787"/>
<dbReference type="KEGG" id="gga:418787"/>
<dbReference type="CTD" id="5611"/>
<dbReference type="VEuPathDB" id="HostDB:geneid_418787"/>
<dbReference type="eggNOG" id="KOG0624">
    <property type="taxonomic scope" value="Eukaryota"/>
</dbReference>
<dbReference type="HOGENOM" id="CLU_015935_0_0_1"/>
<dbReference type="InParanoid" id="Q5ZI13"/>
<dbReference type="OrthoDB" id="1726119at2759"/>
<dbReference type="PhylomeDB" id="Q5ZI13"/>
<dbReference type="PRO" id="PR:Q5ZI13"/>
<dbReference type="Proteomes" id="UP000000539">
    <property type="component" value="Unassembled WGS sequence"/>
</dbReference>
<dbReference type="GO" id="GO:0005829">
    <property type="term" value="C:cytosol"/>
    <property type="evidence" value="ECO:0000250"/>
    <property type="project" value="UniProtKB"/>
</dbReference>
<dbReference type="GO" id="GO:0005783">
    <property type="term" value="C:endoplasmic reticulum"/>
    <property type="evidence" value="ECO:0000250"/>
    <property type="project" value="UniProtKB"/>
</dbReference>
<dbReference type="GO" id="GO:0051787">
    <property type="term" value="F:misfolded protein binding"/>
    <property type="evidence" value="ECO:0000318"/>
    <property type="project" value="GO_Central"/>
</dbReference>
<dbReference type="GO" id="GO:0019901">
    <property type="term" value="F:protein kinase binding"/>
    <property type="evidence" value="ECO:0000250"/>
    <property type="project" value="UniProtKB"/>
</dbReference>
<dbReference type="GO" id="GO:0004860">
    <property type="term" value="F:protein kinase inhibitor activity"/>
    <property type="evidence" value="ECO:0000250"/>
    <property type="project" value="UniProtKB"/>
</dbReference>
<dbReference type="GO" id="GO:0051087">
    <property type="term" value="F:protein-folding chaperone binding"/>
    <property type="evidence" value="ECO:0000318"/>
    <property type="project" value="GO_Central"/>
</dbReference>
<dbReference type="GO" id="GO:0070417">
    <property type="term" value="P:cellular response to cold"/>
    <property type="evidence" value="ECO:0000250"/>
    <property type="project" value="UniProtKB"/>
</dbReference>
<dbReference type="GO" id="GO:1903912">
    <property type="term" value="P:negative regulation of endoplasmic reticulum stress-induced eIF2 alpha phosphorylation"/>
    <property type="evidence" value="ECO:0000250"/>
    <property type="project" value="UniProtKB"/>
</dbReference>
<dbReference type="GO" id="GO:0036494">
    <property type="term" value="P:positive regulation of translation initiation in response to endoplasmic reticulum stress"/>
    <property type="evidence" value="ECO:0000250"/>
    <property type="project" value="UniProtKB"/>
</dbReference>
<dbReference type="GO" id="GO:0034975">
    <property type="term" value="P:protein folding in endoplasmic reticulum"/>
    <property type="evidence" value="ECO:0000318"/>
    <property type="project" value="GO_Central"/>
</dbReference>
<dbReference type="GO" id="GO:0006986">
    <property type="term" value="P:response to unfolded protein"/>
    <property type="evidence" value="ECO:0007669"/>
    <property type="project" value="UniProtKB-KW"/>
</dbReference>
<dbReference type="CDD" id="cd06257">
    <property type="entry name" value="DnaJ"/>
    <property type="match status" value="1"/>
</dbReference>
<dbReference type="FunFam" id="1.25.40.10:FF:000122">
    <property type="entry name" value="DnaJ (Hsp40) homolog, subfamily C, member 3"/>
    <property type="match status" value="1"/>
</dbReference>
<dbReference type="FunFam" id="1.10.287.110:FF:000015">
    <property type="entry name" value="dnaJ homolog subfamily C member 3"/>
    <property type="match status" value="1"/>
</dbReference>
<dbReference type="Gene3D" id="1.10.287.110">
    <property type="entry name" value="DnaJ domain"/>
    <property type="match status" value="1"/>
</dbReference>
<dbReference type="Gene3D" id="1.25.40.10">
    <property type="entry name" value="Tetratricopeptide repeat domain"/>
    <property type="match status" value="1"/>
</dbReference>
<dbReference type="InterPro" id="IPR051727">
    <property type="entry name" value="DnaJ_C3_Co-chaperones"/>
</dbReference>
<dbReference type="InterPro" id="IPR001623">
    <property type="entry name" value="DnaJ_domain"/>
</dbReference>
<dbReference type="InterPro" id="IPR036869">
    <property type="entry name" value="J_dom_sf"/>
</dbReference>
<dbReference type="InterPro" id="IPR011990">
    <property type="entry name" value="TPR-like_helical_dom_sf"/>
</dbReference>
<dbReference type="InterPro" id="IPR019734">
    <property type="entry name" value="TPR_rpt"/>
</dbReference>
<dbReference type="PANTHER" id="PTHR44140:SF3">
    <property type="entry name" value="DNAJ HOMOLOG SUBFAMILY C MEMBER 3"/>
    <property type="match status" value="1"/>
</dbReference>
<dbReference type="PANTHER" id="PTHR44140">
    <property type="entry name" value="LD25575P"/>
    <property type="match status" value="1"/>
</dbReference>
<dbReference type="Pfam" id="PF00226">
    <property type="entry name" value="DnaJ"/>
    <property type="match status" value="1"/>
</dbReference>
<dbReference type="Pfam" id="PF13432">
    <property type="entry name" value="TPR_16"/>
    <property type="match status" value="1"/>
</dbReference>
<dbReference type="Pfam" id="PF14559">
    <property type="entry name" value="TPR_19"/>
    <property type="match status" value="1"/>
</dbReference>
<dbReference type="Pfam" id="PF13181">
    <property type="entry name" value="TPR_8"/>
    <property type="match status" value="1"/>
</dbReference>
<dbReference type="PRINTS" id="PR00625">
    <property type="entry name" value="JDOMAIN"/>
</dbReference>
<dbReference type="SMART" id="SM00271">
    <property type="entry name" value="DnaJ"/>
    <property type="match status" value="1"/>
</dbReference>
<dbReference type="SMART" id="SM00028">
    <property type="entry name" value="TPR"/>
    <property type="match status" value="9"/>
</dbReference>
<dbReference type="SUPFAM" id="SSF46565">
    <property type="entry name" value="Chaperone J-domain"/>
    <property type="match status" value="1"/>
</dbReference>
<dbReference type="SUPFAM" id="SSF48452">
    <property type="entry name" value="TPR-like"/>
    <property type="match status" value="2"/>
</dbReference>
<dbReference type="PROSITE" id="PS50076">
    <property type="entry name" value="DNAJ_2"/>
    <property type="match status" value="1"/>
</dbReference>
<dbReference type="PROSITE" id="PS50005">
    <property type="entry name" value="TPR"/>
    <property type="match status" value="8"/>
</dbReference>
<dbReference type="PROSITE" id="PS50293">
    <property type="entry name" value="TPR_REGION"/>
    <property type="match status" value="1"/>
</dbReference>
<sequence length="503" mass="57327">MVSAAASAGRLGSALPFLLVLLDLQYQGAECGINAEVEKQLEMGKKLLAAGQLADALSHFHAAIEGDSDNYIAYYRRATVYLAMGKSKAAIRDLSKVVELKQDFTSRLQRGHLLLKQGKFDEAEDDFKNVLKSNPSNNEEKEAQTQLTKSDELQRLYSQALSAYRQEDYEAAIPLLDEILAVCVWDAELRELRAECYIKEGEPSKAISDLKAAAKLKSDNTEAFYKISRIYYQLGDHELSLSEVRECLKLDQDHKQCFSLYKQVKKLNKQIESAEEFIREGRYEDAISKYDSVMKTEPDVPVYATRAKERICHCLSKNQQATEAITVCTQVLQLEPTNVNALKDRAEAYLLEDLYEEAIKDYETAQANSENDQQIREGLERAQRMLKQSQKRDYYKILGVKRNARKQEIIKAYRKLASQWHPDNFQSEEEKKKAEKKFIDIAAAKEVLTDPEMRRKFDAGEDPLDAESQQGGGNPFHRNWNTWQGFNPFGSGGGPFTFKFHFS</sequence>
<evidence type="ECO:0000250" key="1"/>
<evidence type="ECO:0000255" key="2"/>
<evidence type="ECO:0000255" key="3">
    <source>
        <dbReference type="PROSITE-ProRule" id="PRU00286"/>
    </source>
</evidence>
<name>DNJC3_CHICK</name>
<comment type="function">
    <text evidence="1">May be involved in the unfolded protein response (UPR) during ER stress.</text>
</comment>
<comment type="subcellular location">
    <subcellularLocation>
        <location evidence="1">Endoplasmic reticulum</location>
    </subcellularLocation>
</comment>
<organism>
    <name type="scientific">Gallus gallus</name>
    <name type="common">Chicken</name>
    <dbReference type="NCBI Taxonomy" id="9031"/>
    <lineage>
        <taxon>Eukaryota</taxon>
        <taxon>Metazoa</taxon>
        <taxon>Chordata</taxon>
        <taxon>Craniata</taxon>
        <taxon>Vertebrata</taxon>
        <taxon>Euteleostomi</taxon>
        <taxon>Archelosauria</taxon>
        <taxon>Archosauria</taxon>
        <taxon>Dinosauria</taxon>
        <taxon>Saurischia</taxon>
        <taxon>Theropoda</taxon>
        <taxon>Coelurosauria</taxon>
        <taxon>Aves</taxon>
        <taxon>Neognathae</taxon>
        <taxon>Galloanserae</taxon>
        <taxon>Galliformes</taxon>
        <taxon>Phasianidae</taxon>
        <taxon>Phasianinae</taxon>
        <taxon>Gallus</taxon>
    </lineage>
</organism>
<reference key="1">
    <citation type="journal article" date="2005" name="Genome Biol.">
        <title>Full-length cDNAs from chicken bursal lymphocytes to facilitate gene function analysis.</title>
        <authorList>
            <person name="Caldwell R.B."/>
            <person name="Kierzek A.M."/>
            <person name="Arakawa H."/>
            <person name="Bezzubov Y."/>
            <person name="Zaim J."/>
            <person name="Fiedler P."/>
            <person name="Kutter S."/>
            <person name="Blagodatski A."/>
            <person name="Kostovska D."/>
            <person name="Koter M."/>
            <person name="Plachy J."/>
            <person name="Carninci P."/>
            <person name="Hayashizaki Y."/>
            <person name="Buerstedde J.-M."/>
        </authorList>
    </citation>
    <scope>NUCLEOTIDE SEQUENCE [LARGE SCALE MRNA]</scope>
    <source>
        <strain>CB</strain>
        <tissue>Bursa of Fabricius</tissue>
    </source>
</reference>